<keyword id="KW-0025">Alternative splicing</keyword>
<keyword id="KW-0040">ANK repeat</keyword>
<keyword id="KW-0966">Cell projection</keyword>
<keyword id="KW-0963">Cytoplasm</keyword>
<keyword id="KW-0539">Nucleus</keyword>
<keyword id="KW-0597">Phosphoprotein</keyword>
<keyword id="KW-1185">Reference proteome</keyword>
<keyword id="KW-0677">Repeat</keyword>
<keyword id="KW-0770">Synapse</keyword>
<protein>
    <recommendedName>
        <fullName>Ankyrin repeat and sterile alpha motif domain-containing protein 1B</fullName>
    </recommendedName>
    <alternativeName>
        <fullName>Amyloid-beta protein intracellular domain-associated protein 1</fullName>
        <shortName>AIDA-1</shortName>
    </alternativeName>
    <alternativeName>
        <fullName>E2A-PBX1-associated protein</fullName>
        <shortName>EB-1</shortName>
    </alternativeName>
</protein>
<dbReference type="EMBL" id="AABR03061338">
    <property type="status" value="NOT_ANNOTATED_CDS"/>
    <property type="molecule type" value="Genomic_DNA"/>
</dbReference>
<dbReference type="EMBL" id="AABR03058184">
    <property type="status" value="NOT_ANNOTATED_CDS"/>
    <property type="molecule type" value="Genomic_DNA"/>
</dbReference>
<dbReference type="EMBL" id="AABR03058315">
    <property type="status" value="NOT_ANNOTATED_CDS"/>
    <property type="molecule type" value="Genomic_DNA"/>
</dbReference>
<dbReference type="EMBL" id="AABR03059811">
    <property type="status" value="NOT_ANNOTATED_CDS"/>
    <property type="molecule type" value="Genomic_DNA"/>
</dbReference>
<dbReference type="EMBL" id="AABR03060233">
    <property type="status" value="NOT_ANNOTATED_CDS"/>
    <property type="molecule type" value="Genomic_DNA"/>
</dbReference>
<dbReference type="EMBL" id="AABR03056177">
    <property type="status" value="NOT_ANNOTATED_CDS"/>
    <property type="molecule type" value="Genomic_DNA"/>
</dbReference>
<dbReference type="EMBL" id="AABR03057703">
    <property type="status" value="NOT_ANNOTATED_CDS"/>
    <property type="molecule type" value="Genomic_DNA"/>
</dbReference>
<dbReference type="EMBL" id="AABR03056626">
    <property type="status" value="NOT_ANNOTATED_CDS"/>
    <property type="molecule type" value="Genomic_DNA"/>
</dbReference>
<dbReference type="EMBL" id="AABR03056332">
    <property type="status" value="NOT_ANNOTATED_CDS"/>
    <property type="molecule type" value="Genomic_DNA"/>
</dbReference>
<dbReference type="EMBL" id="AABR03055414">
    <property type="status" value="NOT_ANNOTATED_CDS"/>
    <property type="molecule type" value="Genomic_DNA"/>
</dbReference>
<dbReference type="EMBL" id="AABR03055479">
    <property type="status" value="NOT_ANNOTATED_CDS"/>
    <property type="molecule type" value="Genomic_DNA"/>
</dbReference>
<dbReference type="EMBL" id="AABR03055359">
    <property type="status" value="NOT_ANNOTATED_CDS"/>
    <property type="molecule type" value="Genomic_DNA"/>
</dbReference>
<dbReference type="EMBL" id="AABR03058062">
    <property type="status" value="NOT_ANNOTATED_CDS"/>
    <property type="molecule type" value="Genomic_DNA"/>
</dbReference>
<dbReference type="RefSeq" id="XP_006241311.1">
    <property type="nucleotide sequence ID" value="XM_006241249.3"/>
</dbReference>
<dbReference type="SMR" id="P0C6S7"/>
<dbReference type="BioGRID" id="260815">
    <property type="interactions" value="2"/>
</dbReference>
<dbReference type="FunCoup" id="P0C6S7">
    <property type="interactions" value="1416"/>
</dbReference>
<dbReference type="IntAct" id="P0C6S7">
    <property type="interactions" value="1"/>
</dbReference>
<dbReference type="MINT" id="P0C6S7"/>
<dbReference type="STRING" id="10116.ENSRNOP00000056036"/>
<dbReference type="GlyGen" id="P0C6S7">
    <property type="glycosylation" value="1 site"/>
</dbReference>
<dbReference type="iPTMnet" id="P0C6S7"/>
<dbReference type="PhosphoSitePlus" id="P0C6S7"/>
<dbReference type="SwissPalm" id="P0C6S7"/>
<dbReference type="PaxDb" id="10116-ENSRNOP00000056036"/>
<dbReference type="Ensembl" id="ENSRNOT00000119672.1">
    <molecule id="P0C6S7-2"/>
    <property type="protein sequence ID" value="ENSRNOP00000083437.1"/>
    <property type="gene ID" value="ENSRNOG00000024870.8"/>
</dbReference>
<dbReference type="AGR" id="RGD:1565556"/>
<dbReference type="RGD" id="1565556">
    <property type="gene designation" value="Anks1b"/>
</dbReference>
<dbReference type="eggNOG" id="KOG0507">
    <property type="taxonomic scope" value="Eukaryota"/>
</dbReference>
<dbReference type="GeneTree" id="ENSGT00940000154572"/>
<dbReference type="InParanoid" id="P0C6S7"/>
<dbReference type="PhylomeDB" id="P0C6S7"/>
<dbReference type="PRO" id="PR:P0C6S7"/>
<dbReference type="Proteomes" id="UP000002494">
    <property type="component" value="Chromosome 7"/>
</dbReference>
<dbReference type="GO" id="GO:0015030">
    <property type="term" value="C:Cajal body"/>
    <property type="evidence" value="ECO:0007669"/>
    <property type="project" value="UniProtKB-SubCell"/>
</dbReference>
<dbReference type="GO" id="GO:0005829">
    <property type="term" value="C:cytosol"/>
    <property type="evidence" value="ECO:0000318"/>
    <property type="project" value="GO_Central"/>
</dbReference>
<dbReference type="GO" id="GO:0043197">
    <property type="term" value="C:dendritic spine"/>
    <property type="evidence" value="ECO:0007669"/>
    <property type="project" value="UniProtKB-SubCell"/>
</dbReference>
<dbReference type="GO" id="GO:0098978">
    <property type="term" value="C:glutamatergic synapse"/>
    <property type="evidence" value="ECO:0000314"/>
    <property type="project" value="SynGO"/>
</dbReference>
<dbReference type="GO" id="GO:0098686">
    <property type="term" value="C:hippocampal mossy fiber to CA3 synapse"/>
    <property type="evidence" value="ECO:0000314"/>
    <property type="project" value="SynGO"/>
</dbReference>
<dbReference type="GO" id="GO:0014069">
    <property type="term" value="C:postsynaptic density"/>
    <property type="evidence" value="ECO:0000314"/>
    <property type="project" value="SynGO"/>
</dbReference>
<dbReference type="GO" id="GO:0099092">
    <property type="term" value="C:postsynaptic density, intracellular component"/>
    <property type="evidence" value="ECO:0000314"/>
    <property type="project" value="SynGO"/>
</dbReference>
<dbReference type="GO" id="GO:0099523">
    <property type="term" value="C:presynaptic cytosol"/>
    <property type="evidence" value="ECO:0000314"/>
    <property type="project" value="SynGO"/>
</dbReference>
<dbReference type="GO" id="GO:0098685">
    <property type="term" value="C:Schaffer collateral - CA1 synapse"/>
    <property type="evidence" value="ECO:0000266"/>
    <property type="project" value="RGD"/>
</dbReference>
<dbReference type="GO" id="GO:0046875">
    <property type="term" value="F:ephrin receptor binding"/>
    <property type="evidence" value="ECO:0000266"/>
    <property type="project" value="RGD"/>
</dbReference>
<dbReference type="GO" id="GO:0099565">
    <property type="term" value="P:chemical synaptic transmission, postsynaptic"/>
    <property type="evidence" value="ECO:0000266"/>
    <property type="project" value="RGD"/>
</dbReference>
<dbReference type="GO" id="GO:0048013">
    <property type="term" value="P:ephrin receptor signaling pathway"/>
    <property type="evidence" value="ECO:0000318"/>
    <property type="project" value="GO_Central"/>
</dbReference>
<dbReference type="GO" id="GO:0099527">
    <property type="term" value="P:postsynapse to nucleus signaling pathway"/>
    <property type="evidence" value="ECO:0000314"/>
    <property type="project" value="SynGO"/>
</dbReference>
<dbReference type="GO" id="GO:0097120">
    <property type="term" value="P:receptor localization to synapse"/>
    <property type="evidence" value="ECO:0000315"/>
    <property type="project" value="MGI"/>
</dbReference>
<dbReference type="GO" id="GO:1900383">
    <property type="term" value="P:regulation of synaptic plasticity by receptor localization to synapse"/>
    <property type="evidence" value="ECO:0000266"/>
    <property type="project" value="RGD"/>
</dbReference>
<dbReference type="CDD" id="cd01274">
    <property type="entry name" value="PTB_Anks"/>
    <property type="match status" value="1"/>
</dbReference>
<dbReference type="CDD" id="cd09499">
    <property type="entry name" value="SAM_AIDA1AB-like_repeat1"/>
    <property type="match status" value="1"/>
</dbReference>
<dbReference type="CDD" id="cd09500">
    <property type="entry name" value="SAM_AIDA1AB-like_repeat2"/>
    <property type="match status" value="1"/>
</dbReference>
<dbReference type="FunFam" id="1.10.150.50:FF:000016">
    <property type="entry name" value="Ankyrin repeat and sterile alpha motif domain-containing protein 1B"/>
    <property type="match status" value="1"/>
</dbReference>
<dbReference type="FunFam" id="2.30.29.30:FF:000045">
    <property type="entry name" value="Ankyrin repeat and sterile alpha motif domain-containing protein 1B"/>
    <property type="match status" value="1"/>
</dbReference>
<dbReference type="FunFam" id="1.10.150.50:FF:000015">
    <property type="entry name" value="ankyrin repeat and sterile alpha motif domain-containing protein 1B"/>
    <property type="match status" value="1"/>
</dbReference>
<dbReference type="FunFam" id="1.25.40.20:FF:000136">
    <property type="entry name" value="ankyrin repeat and sterile alpha motif domain-containing protein 1B isoform X1"/>
    <property type="match status" value="1"/>
</dbReference>
<dbReference type="FunFam" id="1.25.40.20:FF:000099">
    <property type="entry name" value="ankyrin repeat and sterile alpha motif domain-containing protein 1B isoform X5"/>
    <property type="match status" value="1"/>
</dbReference>
<dbReference type="Gene3D" id="1.25.40.20">
    <property type="entry name" value="Ankyrin repeat-containing domain"/>
    <property type="match status" value="2"/>
</dbReference>
<dbReference type="Gene3D" id="2.30.29.30">
    <property type="entry name" value="Pleckstrin-homology domain (PH domain)/Phosphotyrosine-binding domain (PTB)"/>
    <property type="match status" value="1"/>
</dbReference>
<dbReference type="Gene3D" id="1.10.150.50">
    <property type="entry name" value="Transcription Factor, Ets-1"/>
    <property type="match status" value="2"/>
</dbReference>
<dbReference type="InterPro" id="IPR033635">
    <property type="entry name" value="ANKS1/Caskin"/>
</dbReference>
<dbReference type="InterPro" id="IPR002110">
    <property type="entry name" value="Ankyrin_rpt"/>
</dbReference>
<dbReference type="InterPro" id="IPR036770">
    <property type="entry name" value="Ankyrin_rpt-contain_sf"/>
</dbReference>
<dbReference type="InterPro" id="IPR011993">
    <property type="entry name" value="PH-like_dom_sf"/>
</dbReference>
<dbReference type="InterPro" id="IPR006020">
    <property type="entry name" value="PTB/PI_dom"/>
</dbReference>
<dbReference type="InterPro" id="IPR001660">
    <property type="entry name" value="SAM"/>
</dbReference>
<dbReference type="InterPro" id="IPR013761">
    <property type="entry name" value="SAM/pointed_sf"/>
</dbReference>
<dbReference type="InterPro" id="IPR041880">
    <property type="entry name" value="SAM_ANKS1_repeat1"/>
</dbReference>
<dbReference type="InterPro" id="IPR041882">
    <property type="entry name" value="SAM_ANKS1_repeat2"/>
</dbReference>
<dbReference type="PANTHER" id="PTHR24174">
    <property type="entry name" value="ANKYRIN REPEAT AND STERILE ALPHA MOTIF DOMAIN-CONTAINING PROTEIN 1"/>
    <property type="match status" value="1"/>
</dbReference>
<dbReference type="PANTHER" id="PTHR24174:SF3">
    <property type="entry name" value="ANKYRIN REPEAT AND STERILE ALPHA MOTIF DOMAIN-CONTAINING PROTEIN 1B"/>
    <property type="match status" value="1"/>
</dbReference>
<dbReference type="Pfam" id="PF12796">
    <property type="entry name" value="Ank_2"/>
    <property type="match status" value="3"/>
</dbReference>
<dbReference type="Pfam" id="PF00640">
    <property type="entry name" value="PID"/>
    <property type="match status" value="1"/>
</dbReference>
<dbReference type="Pfam" id="PF00536">
    <property type="entry name" value="SAM_1"/>
    <property type="match status" value="2"/>
</dbReference>
<dbReference type="PRINTS" id="PR01415">
    <property type="entry name" value="ANKYRIN"/>
</dbReference>
<dbReference type="SMART" id="SM00248">
    <property type="entry name" value="ANK"/>
    <property type="match status" value="6"/>
</dbReference>
<dbReference type="SMART" id="SM00462">
    <property type="entry name" value="PTB"/>
    <property type="match status" value="1"/>
</dbReference>
<dbReference type="SMART" id="SM00454">
    <property type="entry name" value="SAM"/>
    <property type="match status" value="2"/>
</dbReference>
<dbReference type="SUPFAM" id="SSF48403">
    <property type="entry name" value="Ankyrin repeat"/>
    <property type="match status" value="1"/>
</dbReference>
<dbReference type="SUPFAM" id="SSF50729">
    <property type="entry name" value="PH domain-like"/>
    <property type="match status" value="1"/>
</dbReference>
<dbReference type="SUPFAM" id="SSF47769">
    <property type="entry name" value="SAM/Pointed domain"/>
    <property type="match status" value="2"/>
</dbReference>
<dbReference type="PROSITE" id="PS50297">
    <property type="entry name" value="ANK_REP_REGION"/>
    <property type="match status" value="1"/>
</dbReference>
<dbReference type="PROSITE" id="PS50088">
    <property type="entry name" value="ANK_REPEAT"/>
    <property type="match status" value="5"/>
</dbReference>
<dbReference type="PROSITE" id="PS01179">
    <property type="entry name" value="PID"/>
    <property type="match status" value="1"/>
</dbReference>
<dbReference type="PROSITE" id="PS50105">
    <property type="entry name" value="SAM_DOMAIN"/>
    <property type="match status" value="2"/>
</dbReference>
<gene>
    <name type="primary">Anks1b</name>
</gene>
<name>ANS1B_RAT</name>
<feature type="chain" id="PRO_0000327261" description="Ankyrin repeat and sterile alpha motif domain-containing protein 1B">
    <location>
        <begin position="1"/>
        <end position="1260"/>
    </location>
</feature>
<feature type="repeat" description="ANK 1">
    <location>
        <begin position="2"/>
        <end position="31"/>
    </location>
</feature>
<feature type="repeat" description="ANK 2">
    <location>
        <begin position="58"/>
        <end position="87"/>
    </location>
</feature>
<feature type="repeat" description="ANK 3">
    <location>
        <begin position="91"/>
        <end position="120"/>
    </location>
</feature>
<feature type="repeat" description="ANK 4">
    <location>
        <begin position="127"/>
        <end position="156"/>
    </location>
</feature>
<feature type="repeat" description="ANK 5">
    <location>
        <begin position="160"/>
        <end position="189"/>
    </location>
</feature>
<feature type="repeat" description="ANK 6">
    <location>
        <begin position="193"/>
        <end position="222"/>
    </location>
</feature>
<feature type="repeat" description="ANK 7">
    <location>
        <begin position="225"/>
        <end position="254"/>
    </location>
</feature>
<feature type="domain" description="SAM 1" evidence="4">
    <location>
        <begin position="810"/>
        <end position="876"/>
    </location>
</feature>
<feature type="domain" description="SAM 2" evidence="4">
    <location>
        <begin position="884"/>
        <end position="949"/>
    </location>
</feature>
<feature type="domain" description="PID" evidence="3">
    <location>
        <begin position="1056"/>
        <end position="1213"/>
    </location>
</feature>
<feature type="region of interest" description="Disordered" evidence="5">
    <location>
        <begin position="298"/>
        <end position="326"/>
    </location>
</feature>
<feature type="region of interest" description="Disordered" evidence="5">
    <location>
        <begin position="368"/>
        <end position="402"/>
    </location>
</feature>
<feature type="region of interest" description="Disordered" evidence="5">
    <location>
        <begin position="491"/>
        <end position="513"/>
    </location>
</feature>
<feature type="region of interest" description="Disordered" evidence="5">
    <location>
        <begin position="556"/>
        <end position="642"/>
    </location>
</feature>
<feature type="region of interest" description="Disordered" evidence="5">
    <location>
        <begin position="754"/>
        <end position="778"/>
    </location>
</feature>
<feature type="region of interest" description="Disordered" evidence="5">
    <location>
        <begin position="946"/>
        <end position="989"/>
    </location>
</feature>
<feature type="region of interest" description="Disordered" evidence="5">
    <location>
        <begin position="1197"/>
        <end position="1217"/>
    </location>
</feature>
<feature type="short sequence motif" description="Nuclear localization signal" evidence="1">
    <location>
        <begin position="935"/>
        <end position="938"/>
    </location>
</feature>
<feature type="compositionally biased region" description="Polar residues" evidence="5">
    <location>
        <begin position="306"/>
        <end position="326"/>
    </location>
</feature>
<feature type="compositionally biased region" description="Polar residues" evidence="5">
    <location>
        <begin position="372"/>
        <end position="385"/>
    </location>
</feature>
<feature type="compositionally biased region" description="Low complexity" evidence="5">
    <location>
        <begin position="556"/>
        <end position="575"/>
    </location>
</feature>
<feature type="compositionally biased region" description="Basic and acidic residues" evidence="5">
    <location>
        <begin position="576"/>
        <end position="588"/>
    </location>
</feature>
<feature type="compositionally biased region" description="Low complexity" evidence="5">
    <location>
        <begin position="969"/>
        <end position="984"/>
    </location>
</feature>
<feature type="modified residue" description="Phosphoserine" evidence="2">
    <location>
        <position position="310"/>
    </location>
</feature>
<feature type="modified residue" description="Phosphoserine" evidence="2">
    <location>
        <position position="311"/>
    </location>
</feature>
<feature type="modified residue" description="Phosphoserine" evidence="2">
    <location>
        <position position="315"/>
    </location>
</feature>
<feature type="modified residue" description="Phosphoserine" evidence="2">
    <location>
        <position position="354"/>
    </location>
</feature>
<feature type="modified residue" description="Phosphoserine" evidence="8">
    <location>
        <position position="365"/>
    </location>
</feature>
<feature type="modified residue" description="Phosphothreonine" evidence="2">
    <location>
        <position position="504"/>
    </location>
</feature>
<feature type="modified residue" description="Phosphoserine" evidence="2">
    <location>
        <position position="508"/>
    </location>
</feature>
<feature type="modified residue" description="Phosphoserine" evidence="2">
    <location>
        <position position="511"/>
    </location>
</feature>
<feature type="modified residue" description="Phosphoserine" evidence="2">
    <location>
        <position position="739"/>
    </location>
</feature>
<feature type="modified residue" description="Phosphothreonine" evidence="8">
    <location>
        <position position="773"/>
    </location>
</feature>
<feature type="modified residue" description="Phosphoserine" evidence="8">
    <location>
        <position position="775"/>
    </location>
</feature>
<feature type="modified residue" description="Phosphotyrosine" evidence="2">
    <location>
        <position position="901"/>
    </location>
</feature>
<feature type="modified residue" description="Phosphoserine" evidence="2">
    <location>
        <position position="974"/>
    </location>
</feature>
<feature type="modified residue" description="Phosphotyrosine" evidence="2">
    <location>
        <position position="1007"/>
    </location>
</feature>
<feature type="splice variant" id="VSP_032720" description="In isoform 2 and isoform 3." evidence="7">
    <location>
        <begin position="1"/>
        <end position="771"/>
    </location>
</feature>
<feature type="splice variant" id="VSP_032721" description="In isoform 2 and isoform 3." evidence="7">
    <original>RTPSFTSEWEEIDKIMNSIDVGINSELEGMNGEATR</original>
    <variation>MMWQCHLSAQDYRYYPVDGYSLLKRFPLHPLTG</variation>
    <location>
        <begin position="772"/>
        <end position="807"/>
    </location>
</feature>
<feature type="splice variant" id="VSP_032723" description="In isoform 2." evidence="7">
    <location>
        <begin position="963"/>
        <end position="1022"/>
    </location>
</feature>
<feature type="splice variant" id="VSP_032722" description="In isoform 3." evidence="7">
    <original>Q</original>
    <variation>QSSVCEIWTNQNAGFPFSAIHQVHN</variation>
    <location>
        <position position="1022"/>
    </location>
</feature>
<feature type="mutagenesis site" description="Does not shuttle to the nucleus in response to NMDA stimulation." evidence="6">
    <original>HRKR</original>
    <variation>AAAA</variation>
    <location>
        <begin position="935"/>
        <end position="938"/>
    </location>
</feature>
<feature type="mutagenesis site" description="Shuttles to the nucleus is irrespective of NMDA stimulation.">
    <original>RRRR</original>
    <variation>AAAA</variation>
    <location>
        <begin position="1000"/>
        <end position="1003"/>
    </location>
</feature>
<proteinExistence type="evidence at protein level"/>
<comment type="function">
    <text evidence="6">Isoform 2 may participate in the regulation of nucleoplasmic coilin protein interactions in neuronal and transformed cells.</text>
</comment>
<comment type="function">
    <text evidence="6">Isoform 3 can regulate global protein synthesis by altering nucleolar numbers.</text>
</comment>
<comment type="subunit">
    <text evidence="1 6">Interacts with EPHA8 (By similarity). Isoform 2 interacts with COIL. Isoform 3 interacts with DLG4.</text>
</comment>
<comment type="subcellular location">
    <subcellularLocation>
        <location evidence="1">Cytoplasm</location>
    </subcellularLocation>
</comment>
<comment type="subcellular location">
    <molecule>Isoform 2</molecule>
    <subcellularLocation>
        <location>Nucleus</location>
    </subcellularLocation>
</comment>
<comment type="subcellular location">
    <molecule>Isoform 3</molecule>
    <subcellularLocation>
        <location>Postsynaptic density</location>
    </subcellularLocation>
    <subcellularLocation>
        <location>Cell projection</location>
        <location>Dendritic spine</location>
    </subcellularLocation>
    <subcellularLocation>
        <location>Nucleus</location>
    </subcellularLocation>
    <subcellularLocation>
        <location>Nucleus</location>
        <location>Cajal body</location>
    </subcellularLocation>
    <text>The synaptic localization requires DLG4 interaction. Translocation to the nucleus in response to stimulation of NMDA receptors (NMDARs) in a calcium-independent manner.</text>
</comment>
<comment type="alternative products">
    <event type="alternative splicing"/>
    <isoform>
        <id>P0C6S7-1</id>
        <name>1</name>
        <sequence type="displayed"/>
    </isoform>
    <isoform>
        <id>P0C6S7-2</id>
        <name>2</name>
        <name>AIDA-1e</name>
        <sequence type="described" ref="VSP_032720 VSP_032721 VSP_032723"/>
    </isoform>
    <isoform>
        <id>P0C6S7-3</id>
        <name>3</name>
        <name>AIDA-1d</name>
        <sequence type="described" ref="VSP_032720 VSP_032721 VSP_032722"/>
    </isoform>
</comment>
<comment type="tissue specificity">
    <text evidence="6">Isoform 3 is brain specific and highly enriched in the postsynaptic densities (PSDs), especially in cortical, striatal and hippocampal PSDs.</text>
</comment>
<comment type="PTM">
    <text evidence="6">Nuclear translocation of isoform 3 requires an NMDAR-dependent proteolytic cleavage. A 35 kDa N-terminal form shuttles to the nucleus.</text>
</comment>
<reference key="1">
    <citation type="journal article" date="2007" name="Nat. Neurosci.">
        <title>Activity-dependent AIDA-1 nuclear signaling regulates nucleolar numbers and protein synthesis in neurons.</title>
        <authorList>
            <person name="Jordan B.A."/>
            <person name="Fernholz B.D."/>
            <person name="Khatri L."/>
            <person name="Ziff E.B."/>
        </authorList>
    </citation>
    <scope>NUCLEOTIDE SEQUENCE [MRNA] (ISOFORMS 2 AND 3)</scope>
    <scope>FUNCTION</scope>
    <scope>INTERACTION WITH DLG4</scope>
    <scope>SUBCELLULAR LOCATION</scope>
    <scope>TISSUE SPECIFICITY</scope>
    <scope>MUTAGENESIS OF 935-HIS--ARG-938</scope>
    <scope>PROTEOLYTIC CLEAVAGE</scope>
    <source>
        <tissue>Brain</tissue>
    </source>
</reference>
<reference key="2">
    <citation type="journal article" date="2004" name="Nature">
        <title>Genome sequence of the Brown Norway rat yields insights into mammalian evolution.</title>
        <authorList>
            <person name="Gibbs R.A."/>
            <person name="Weinstock G.M."/>
            <person name="Metzker M.L."/>
            <person name="Muzny D.M."/>
            <person name="Sodergren E.J."/>
            <person name="Scherer S."/>
            <person name="Scott G."/>
            <person name="Steffen D."/>
            <person name="Worley K.C."/>
            <person name="Burch P.E."/>
            <person name="Okwuonu G."/>
            <person name="Hines S."/>
            <person name="Lewis L."/>
            <person name="Deramo C."/>
            <person name="Delgado O."/>
            <person name="Dugan-Rocha S."/>
            <person name="Miner G."/>
            <person name="Morgan M."/>
            <person name="Hawes A."/>
            <person name="Gill R."/>
            <person name="Holt R.A."/>
            <person name="Adams M.D."/>
            <person name="Amanatides P.G."/>
            <person name="Baden-Tillson H."/>
            <person name="Barnstead M."/>
            <person name="Chin S."/>
            <person name="Evans C.A."/>
            <person name="Ferriera S."/>
            <person name="Fosler C."/>
            <person name="Glodek A."/>
            <person name="Gu Z."/>
            <person name="Jennings D."/>
            <person name="Kraft C.L."/>
            <person name="Nguyen T."/>
            <person name="Pfannkoch C.M."/>
            <person name="Sitter C."/>
            <person name="Sutton G.G."/>
            <person name="Venter J.C."/>
            <person name="Woodage T."/>
            <person name="Smith D."/>
            <person name="Lee H.-M."/>
            <person name="Gustafson E."/>
            <person name="Cahill P."/>
            <person name="Kana A."/>
            <person name="Doucette-Stamm L."/>
            <person name="Weinstock K."/>
            <person name="Fechtel K."/>
            <person name="Weiss R.B."/>
            <person name="Dunn D.M."/>
            <person name="Green E.D."/>
            <person name="Blakesley R.W."/>
            <person name="Bouffard G.G."/>
            <person name="De Jong P.J."/>
            <person name="Osoegawa K."/>
            <person name="Zhu B."/>
            <person name="Marra M."/>
            <person name="Schein J."/>
            <person name="Bosdet I."/>
            <person name="Fjell C."/>
            <person name="Jones S."/>
            <person name="Krzywinski M."/>
            <person name="Mathewson C."/>
            <person name="Siddiqui A."/>
            <person name="Wye N."/>
            <person name="McPherson J."/>
            <person name="Zhao S."/>
            <person name="Fraser C.M."/>
            <person name="Shetty J."/>
            <person name="Shatsman S."/>
            <person name="Geer K."/>
            <person name="Chen Y."/>
            <person name="Abramzon S."/>
            <person name="Nierman W.C."/>
            <person name="Havlak P.H."/>
            <person name="Chen R."/>
            <person name="Durbin K.J."/>
            <person name="Egan A."/>
            <person name="Ren Y."/>
            <person name="Song X.-Z."/>
            <person name="Li B."/>
            <person name="Liu Y."/>
            <person name="Qin X."/>
            <person name="Cawley S."/>
            <person name="Cooney A.J."/>
            <person name="D'Souza L.M."/>
            <person name="Martin K."/>
            <person name="Wu J.Q."/>
            <person name="Gonzalez-Garay M.L."/>
            <person name="Jackson A.R."/>
            <person name="Kalafus K.J."/>
            <person name="McLeod M.P."/>
            <person name="Milosavljevic A."/>
            <person name="Virk D."/>
            <person name="Volkov A."/>
            <person name="Wheeler D.A."/>
            <person name="Zhang Z."/>
            <person name="Bailey J.A."/>
            <person name="Eichler E.E."/>
            <person name="Tuzun E."/>
            <person name="Birney E."/>
            <person name="Mongin E."/>
            <person name="Ureta-Vidal A."/>
            <person name="Woodwark C."/>
            <person name="Zdobnov E."/>
            <person name="Bork P."/>
            <person name="Suyama M."/>
            <person name="Torrents D."/>
            <person name="Alexandersson M."/>
            <person name="Trask B.J."/>
            <person name="Young J.M."/>
            <person name="Huang H."/>
            <person name="Wang H."/>
            <person name="Xing H."/>
            <person name="Daniels S."/>
            <person name="Gietzen D."/>
            <person name="Schmidt J."/>
            <person name="Stevens K."/>
            <person name="Vitt U."/>
            <person name="Wingrove J."/>
            <person name="Camara F."/>
            <person name="Mar Alba M."/>
            <person name="Abril J.F."/>
            <person name="Guigo R."/>
            <person name="Smit A."/>
            <person name="Dubchak I."/>
            <person name="Rubin E.M."/>
            <person name="Couronne O."/>
            <person name="Poliakov A."/>
            <person name="Huebner N."/>
            <person name="Ganten D."/>
            <person name="Goesele C."/>
            <person name="Hummel O."/>
            <person name="Kreitler T."/>
            <person name="Lee Y.-A."/>
            <person name="Monti J."/>
            <person name="Schulz H."/>
            <person name="Zimdahl H."/>
            <person name="Himmelbauer H."/>
            <person name="Lehrach H."/>
            <person name="Jacob H.J."/>
            <person name="Bromberg S."/>
            <person name="Gullings-Handley J."/>
            <person name="Jensen-Seaman M.I."/>
            <person name="Kwitek A.E."/>
            <person name="Lazar J."/>
            <person name="Pasko D."/>
            <person name="Tonellato P.J."/>
            <person name="Twigger S."/>
            <person name="Ponting C.P."/>
            <person name="Duarte J.M."/>
            <person name="Rice S."/>
            <person name="Goodstadt L."/>
            <person name="Beatson S.A."/>
            <person name="Emes R.D."/>
            <person name="Winter E.E."/>
            <person name="Webber C."/>
            <person name="Brandt P."/>
            <person name="Nyakatura G."/>
            <person name="Adetobi M."/>
            <person name="Chiaromonte F."/>
            <person name="Elnitski L."/>
            <person name="Eswara P."/>
            <person name="Hardison R.C."/>
            <person name="Hou M."/>
            <person name="Kolbe D."/>
            <person name="Makova K."/>
            <person name="Miller W."/>
            <person name="Nekrutenko A."/>
            <person name="Riemer C."/>
            <person name="Schwartz S."/>
            <person name="Taylor J."/>
            <person name="Yang S."/>
            <person name="Zhang Y."/>
            <person name="Lindpaintner K."/>
            <person name="Andrews T.D."/>
            <person name="Caccamo M."/>
            <person name="Clamp M."/>
            <person name="Clarke L."/>
            <person name="Curwen V."/>
            <person name="Durbin R.M."/>
            <person name="Eyras E."/>
            <person name="Searle S.M."/>
            <person name="Cooper G.M."/>
            <person name="Batzoglou S."/>
            <person name="Brudno M."/>
            <person name="Sidow A."/>
            <person name="Stone E.A."/>
            <person name="Payseur B.A."/>
            <person name="Bourque G."/>
            <person name="Lopez-Otin C."/>
            <person name="Puente X.S."/>
            <person name="Chakrabarti K."/>
            <person name="Chatterji S."/>
            <person name="Dewey C."/>
            <person name="Pachter L."/>
            <person name="Bray N."/>
            <person name="Yap V.B."/>
            <person name="Caspi A."/>
            <person name="Tesler G."/>
            <person name="Pevzner P.A."/>
            <person name="Haussler D."/>
            <person name="Roskin K.M."/>
            <person name="Baertsch R."/>
            <person name="Clawson H."/>
            <person name="Furey T.S."/>
            <person name="Hinrichs A.S."/>
            <person name="Karolchik D."/>
            <person name="Kent W.J."/>
            <person name="Rosenbloom K.R."/>
            <person name="Trumbower H."/>
            <person name="Weirauch M."/>
            <person name="Cooper D.N."/>
            <person name="Stenson P.D."/>
            <person name="Ma B."/>
            <person name="Brent M."/>
            <person name="Arumugam M."/>
            <person name="Shteynberg D."/>
            <person name="Copley R.R."/>
            <person name="Taylor M.S."/>
            <person name="Riethman H."/>
            <person name="Mudunuri U."/>
            <person name="Peterson J."/>
            <person name="Guyer M."/>
            <person name="Felsenfeld A."/>
            <person name="Old S."/>
            <person name="Mockrin S."/>
            <person name="Collins F.S."/>
        </authorList>
    </citation>
    <scope>NUCLEOTIDE SEQUENCE [LARGE SCALE GENOMIC DNA]</scope>
    <source>
        <strain>Brown Norway</strain>
    </source>
</reference>
<reference key="3">
    <citation type="journal article" date="2004" name="Mol. Cell. Proteomics">
        <title>Identification and verification of novel rodent postsynaptic density proteins.</title>
        <authorList>
            <person name="Jordan B.A."/>
            <person name="Fernholz B.D."/>
            <person name="Boussac M."/>
            <person name="Xu C."/>
            <person name="Grigorean G."/>
            <person name="Ziff E.B."/>
            <person name="Neubert T.A."/>
        </authorList>
    </citation>
    <scope>IDENTIFICATION BY MASS SPECTROMETRY (ISOFORM 3)</scope>
    <scope>SUBCELLULAR LOCATION</scope>
</reference>
<reference key="4">
    <citation type="journal article" date="2012" name="Nat. Commun.">
        <title>Quantitative maps of protein phosphorylation sites across 14 different rat organs and tissues.</title>
        <authorList>
            <person name="Lundby A."/>
            <person name="Secher A."/>
            <person name="Lage K."/>
            <person name="Nordsborg N.B."/>
            <person name="Dmytriyev A."/>
            <person name="Lundby C."/>
            <person name="Olsen J.V."/>
        </authorList>
    </citation>
    <scope>PHOSPHORYLATION [LARGE SCALE ANALYSIS] AT SER-365; THR-773 AND SER-775</scope>
    <scope>IDENTIFICATION BY MASS SPECTROMETRY [LARGE SCALE ANALYSIS]</scope>
</reference>
<evidence type="ECO:0000250" key="1"/>
<evidence type="ECO:0000250" key="2">
    <source>
        <dbReference type="UniProtKB" id="Q8BIZ1"/>
    </source>
</evidence>
<evidence type="ECO:0000255" key="3">
    <source>
        <dbReference type="PROSITE-ProRule" id="PRU00148"/>
    </source>
</evidence>
<evidence type="ECO:0000255" key="4">
    <source>
        <dbReference type="PROSITE-ProRule" id="PRU00184"/>
    </source>
</evidence>
<evidence type="ECO:0000256" key="5">
    <source>
        <dbReference type="SAM" id="MobiDB-lite"/>
    </source>
</evidence>
<evidence type="ECO:0000269" key="6">
    <source>
    </source>
</evidence>
<evidence type="ECO:0000303" key="7">
    <source>
    </source>
</evidence>
<evidence type="ECO:0007744" key="8">
    <source>
    </source>
</evidence>
<accession>P0C6S7</accession>
<sequence>MGKDQELLEAARTGNVALVEKLLSGRKGGILGGGSGPLPLSNLLSIWRGPNVNCTDSSGYTALHHAALNGHKDIVLKLLQFEASTNVADNKGYFPIHLAAWKGDVEIVKILIHHGPSHSRVNEQNNENETALHCAAQYGHSEVVAVLLEELTDPTIRNSKLETPLDLAALYGRLRVVKMIISAHPNLMSCNTRKHTPLHLAARNGHKAVVQVLLEAGMDVSCQTEKGSALHEAALFGKVDVVRVLLETGIDANIKDSLGRTVLDILKEHPSQKSLQIATLLQDYLEGVGRSVVLEEEHAQEDTAQETRLSSPAQSPSQKTKSETVTGELSKLLDEIKLCQEKDYSFEDLCHTISDHYLDNLSKISEEELGKNGSQSVRTSSTINLSPGEVEDEEEDPNSCGPTGLWEALTPCNGCRNLGFPMLAQESYPKKRNYPMEIVPSASLDTFPSENENFLCELVDTAVTKKPCSLEIARAPSPRTDNASEVAITAPGTGHHRNSSTGPTPDCSPPSPDTALKNIVKVIRPQPKQRTSIVSSLDFQRMNHNQEYFEISTSTGCTSFTSSPPVSPPTSSVETTEIKNEGAEHTDDLSQQEDDEPPKEYDAGQFAGLLHGSSPACEAPENPFHLYGKRNQGEDGQEEASLANSPLPFKQTPIENNPEPSVKKIKPKVVSRTIFHKRSHQLENHTIVGTRMSRGGSRNGDQWGVNPGGFVERACTLGRIRSLPKALIDMHLSKNVSKSDSDLIAYPSKDKARVNWSKSSTAERSSKDNSERTPSFTSEWEEIDKIMNSIDVGINSELEGMNGEATRPRCPVQTVGQWLESIGLPQYENHLTANGFDNVQFMGSNVMEDQDLLEIGILNSGHRQRILQAIQLLPKMRPIGHDGYHPTSVAEWLDSIELGDYTKAFLINGYTSMDLLKKIWELELINVLKISLIGHRKRILASLGDRLHEDPPQKPPRSITLREPSGNHTPPQLSPSLSQSTYTTGGSLDVPHIIMQGDARRRRNENYFDDIPRSKLERQMAQTGDWGEPSITLRPPNEATASTPVQYWQHHPEKLIFQSCDYKAFYLGSMLIKELRGTESTQDACAKMRANCQKSTEQMKKVPTIILSVSYKGVKFIDAANKNIIAEHEIRNISCAAQDPEDLSTFAYITKDLKSNHHYCHVFTAFDVNLAYEIILTLGQAFEVAYQLALQARKGGHSSTLPESFENKPSKPIPKPRVSIRKSVQIDPSEQKTLANLPWIVEPGQEAKRGINTKYETTIF</sequence>
<organism>
    <name type="scientific">Rattus norvegicus</name>
    <name type="common">Rat</name>
    <dbReference type="NCBI Taxonomy" id="10116"/>
    <lineage>
        <taxon>Eukaryota</taxon>
        <taxon>Metazoa</taxon>
        <taxon>Chordata</taxon>
        <taxon>Craniata</taxon>
        <taxon>Vertebrata</taxon>
        <taxon>Euteleostomi</taxon>
        <taxon>Mammalia</taxon>
        <taxon>Eutheria</taxon>
        <taxon>Euarchontoglires</taxon>
        <taxon>Glires</taxon>
        <taxon>Rodentia</taxon>
        <taxon>Myomorpha</taxon>
        <taxon>Muroidea</taxon>
        <taxon>Muridae</taxon>
        <taxon>Murinae</taxon>
        <taxon>Rattus</taxon>
    </lineage>
</organism>